<feature type="chain" id="PRO_0000230904" description="Transcriptional repressor NrdR">
    <location>
        <begin position="1"/>
        <end position="158"/>
    </location>
</feature>
<feature type="domain" description="ATP-cone" evidence="1">
    <location>
        <begin position="49"/>
        <end position="139"/>
    </location>
</feature>
<feature type="zinc finger region" evidence="1">
    <location>
        <begin position="3"/>
        <end position="34"/>
    </location>
</feature>
<protein>
    <recommendedName>
        <fullName evidence="1">Transcriptional repressor NrdR</fullName>
    </recommendedName>
</protein>
<proteinExistence type="inferred from homology"/>
<organism>
    <name type="scientific">Thiobacillus denitrificans (strain ATCC 25259 / T1)</name>
    <dbReference type="NCBI Taxonomy" id="292415"/>
    <lineage>
        <taxon>Bacteria</taxon>
        <taxon>Pseudomonadati</taxon>
        <taxon>Pseudomonadota</taxon>
        <taxon>Betaproteobacteria</taxon>
        <taxon>Nitrosomonadales</taxon>
        <taxon>Thiobacillaceae</taxon>
        <taxon>Thiobacillus</taxon>
    </lineage>
</organism>
<accession>Q3SGX4</accession>
<sequence length="158" mass="18026">MKCPFCGSLDTQVIDSRANEAGDAIRRRRRCAACDKRFTTWETAELRPPQIVKTNGTREDFSETKLREGFRRALHKRPVSTELVDAAVDRIRQRLLTLGEREVPAREVGELVMTELKKLDKIAYIRFASVYKSFKDPDDFRDVLEDLAQGPQAGDDPA</sequence>
<name>NRDR_THIDA</name>
<reference key="1">
    <citation type="journal article" date="2006" name="J. Bacteriol.">
        <title>The genome sequence of the obligately chemolithoautotrophic, facultatively anaerobic bacterium Thiobacillus denitrificans.</title>
        <authorList>
            <person name="Beller H.R."/>
            <person name="Chain P.S."/>
            <person name="Letain T.E."/>
            <person name="Chakicherla A."/>
            <person name="Larimer F.W."/>
            <person name="Richardson P.M."/>
            <person name="Coleman M.A."/>
            <person name="Wood A.P."/>
            <person name="Kelly D.P."/>
        </authorList>
    </citation>
    <scope>NUCLEOTIDE SEQUENCE [LARGE SCALE GENOMIC DNA]</scope>
    <source>
        <strain>ATCC 25259 / T1</strain>
    </source>
</reference>
<evidence type="ECO:0000255" key="1">
    <source>
        <dbReference type="HAMAP-Rule" id="MF_00440"/>
    </source>
</evidence>
<gene>
    <name evidence="1" type="primary">nrdR</name>
    <name type="ordered locus">Tbd_2166</name>
</gene>
<keyword id="KW-0067">ATP-binding</keyword>
<keyword id="KW-0238">DNA-binding</keyword>
<keyword id="KW-0479">Metal-binding</keyword>
<keyword id="KW-0547">Nucleotide-binding</keyword>
<keyword id="KW-1185">Reference proteome</keyword>
<keyword id="KW-0678">Repressor</keyword>
<keyword id="KW-0804">Transcription</keyword>
<keyword id="KW-0805">Transcription regulation</keyword>
<keyword id="KW-0862">Zinc</keyword>
<keyword id="KW-0863">Zinc-finger</keyword>
<comment type="function">
    <text evidence="1">Negatively regulates transcription of bacterial ribonucleotide reductase nrd genes and operons by binding to NrdR-boxes.</text>
</comment>
<comment type="cofactor">
    <cofactor evidence="1">
        <name>Zn(2+)</name>
        <dbReference type="ChEBI" id="CHEBI:29105"/>
    </cofactor>
    <text evidence="1">Binds 1 zinc ion.</text>
</comment>
<comment type="similarity">
    <text evidence="1">Belongs to the NrdR family.</text>
</comment>
<dbReference type="EMBL" id="CP000116">
    <property type="protein sequence ID" value="AAZ98119.1"/>
    <property type="molecule type" value="Genomic_DNA"/>
</dbReference>
<dbReference type="RefSeq" id="WP_011312678.1">
    <property type="nucleotide sequence ID" value="NC_007404.1"/>
</dbReference>
<dbReference type="SMR" id="Q3SGX4"/>
<dbReference type="STRING" id="292415.Tbd_2166"/>
<dbReference type="KEGG" id="tbd:Tbd_2166"/>
<dbReference type="eggNOG" id="COG1327">
    <property type="taxonomic scope" value="Bacteria"/>
</dbReference>
<dbReference type="HOGENOM" id="CLU_108412_0_0_4"/>
<dbReference type="OrthoDB" id="9807461at2"/>
<dbReference type="Proteomes" id="UP000008291">
    <property type="component" value="Chromosome"/>
</dbReference>
<dbReference type="GO" id="GO:0005524">
    <property type="term" value="F:ATP binding"/>
    <property type="evidence" value="ECO:0007669"/>
    <property type="project" value="UniProtKB-KW"/>
</dbReference>
<dbReference type="GO" id="GO:0003677">
    <property type="term" value="F:DNA binding"/>
    <property type="evidence" value="ECO:0007669"/>
    <property type="project" value="UniProtKB-KW"/>
</dbReference>
<dbReference type="GO" id="GO:0008270">
    <property type="term" value="F:zinc ion binding"/>
    <property type="evidence" value="ECO:0007669"/>
    <property type="project" value="UniProtKB-UniRule"/>
</dbReference>
<dbReference type="GO" id="GO:0045892">
    <property type="term" value="P:negative regulation of DNA-templated transcription"/>
    <property type="evidence" value="ECO:0007669"/>
    <property type="project" value="UniProtKB-UniRule"/>
</dbReference>
<dbReference type="HAMAP" id="MF_00440">
    <property type="entry name" value="NrdR"/>
    <property type="match status" value="1"/>
</dbReference>
<dbReference type="InterPro" id="IPR005144">
    <property type="entry name" value="ATP-cone_dom"/>
</dbReference>
<dbReference type="InterPro" id="IPR055173">
    <property type="entry name" value="NrdR-like_N"/>
</dbReference>
<dbReference type="InterPro" id="IPR003796">
    <property type="entry name" value="RNR_NrdR-like"/>
</dbReference>
<dbReference type="NCBIfam" id="TIGR00244">
    <property type="entry name" value="transcriptional regulator NrdR"/>
    <property type="match status" value="1"/>
</dbReference>
<dbReference type="PANTHER" id="PTHR30455">
    <property type="entry name" value="TRANSCRIPTIONAL REPRESSOR NRDR"/>
    <property type="match status" value="1"/>
</dbReference>
<dbReference type="PANTHER" id="PTHR30455:SF2">
    <property type="entry name" value="TRANSCRIPTIONAL REPRESSOR NRDR"/>
    <property type="match status" value="1"/>
</dbReference>
<dbReference type="Pfam" id="PF03477">
    <property type="entry name" value="ATP-cone"/>
    <property type="match status" value="1"/>
</dbReference>
<dbReference type="Pfam" id="PF22811">
    <property type="entry name" value="Zn_ribbon_NrdR"/>
    <property type="match status" value="1"/>
</dbReference>
<dbReference type="PROSITE" id="PS51161">
    <property type="entry name" value="ATP_CONE"/>
    <property type="match status" value="1"/>
</dbReference>